<accession>A3DBK6</accession>
<gene>
    <name evidence="1" type="primary">minE</name>
    <name type="ordered locus">Cthe_0094</name>
</gene>
<dbReference type="EMBL" id="CP000568">
    <property type="protein sequence ID" value="ABN51335.1"/>
    <property type="molecule type" value="Genomic_DNA"/>
</dbReference>
<dbReference type="RefSeq" id="WP_003512076.1">
    <property type="nucleotide sequence ID" value="NC_009012.1"/>
</dbReference>
<dbReference type="SMR" id="A3DBK6"/>
<dbReference type="STRING" id="203119.Cthe_0094"/>
<dbReference type="GeneID" id="35806173"/>
<dbReference type="KEGG" id="cth:Cthe_0094"/>
<dbReference type="eggNOG" id="COG0851">
    <property type="taxonomic scope" value="Bacteria"/>
</dbReference>
<dbReference type="HOGENOM" id="CLU_137929_1_1_9"/>
<dbReference type="OrthoDB" id="9796578at2"/>
<dbReference type="Proteomes" id="UP000002145">
    <property type="component" value="Chromosome"/>
</dbReference>
<dbReference type="GO" id="GO:0051301">
    <property type="term" value="P:cell division"/>
    <property type="evidence" value="ECO:0007669"/>
    <property type="project" value="UniProtKB-KW"/>
</dbReference>
<dbReference type="GO" id="GO:0032955">
    <property type="term" value="P:regulation of division septum assembly"/>
    <property type="evidence" value="ECO:0007669"/>
    <property type="project" value="InterPro"/>
</dbReference>
<dbReference type="Gene3D" id="3.30.1070.10">
    <property type="entry name" value="Cell division topological specificity factor MinE"/>
    <property type="match status" value="1"/>
</dbReference>
<dbReference type="HAMAP" id="MF_00262">
    <property type="entry name" value="MinE"/>
    <property type="match status" value="1"/>
</dbReference>
<dbReference type="InterPro" id="IPR005527">
    <property type="entry name" value="MinE"/>
</dbReference>
<dbReference type="InterPro" id="IPR036707">
    <property type="entry name" value="MinE_sf"/>
</dbReference>
<dbReference type="NCBIfam" id="TIGR01215">
    <property type="entry name" value="minE"/>
    <property type="match status" value="1"/>
</dbReference>
<dbReference type="Pfam" id="PF03776">
    <property type="entry name" value="MinE"/>
    <property type="match status" value="1"/>
</dbReference>
<dbReference type="SUPFAM" id="SSF55229">
    <property type="entry name" value="Cell division protein MinE topological specificity domain"/>
    <property type="match status" value="1"/>
</dbReference>
<feature type="chain" id="PRO_0000298104" description="Cell division topological specificity factor">
    <location>
        <begin position="1"/>
        <end position="94"/>
    </location>
</feature>
<organism>
    <name type="scientific">Acetivibrio thermocellus (strain ATCC 27405 / DSM 1237 / JCM 9322 / NBRC 103400 / NCIMB 10682 / NRRL B-4536 / VPI 7372)</name>
    <name type="common">Clostridium thermocellum</name>
    <dbReference type="NCBI Taxonomy" id="203119"/>
    <lineage>
        <taxon>Bacteria</taxon>
        <taxon>Bacillati</taxon>
        <taxon>Bacillota</taxon>
        <taxon>Clostridia</taxon>
        <taxon>Eubacteriales</taxon>
        <taxon>Oscillospiraceae</taxon>
        <taxon>Acetivibrio</taxon>
    </lineage>
</organism>
<proteinExistence type="inferred from homology"/>
<sequence length="94" mass="10499">MLLDLSKIFGKSKNSKDLAKERLKLVLIHDRANVSPQFLEMVKGEIIKVISNYMDVDEESLDIQMTRTKSEDGNSVVPALVANIPIRSVKNSGK</sequence>
<name>MINE_ACET2</name>
<evidence type="ECO:0000255" key="1">
    <source>
        <dbReference type="HAMAP-Rule" id="MF_00262"/>
    </source>
</evidence>
<reference key="1">
    <citation type="submission" date="2007-02" db="EMBL/GenBank/DDBJ databases">
        <title>Complete sequence of Clostridium thermocellum ATCC 27405.</title>
        <authorList>
            <consortium name="US DOE Joint Genome Institute"/>
            <person name="Copeland A."/>
            <person name="Lucas S."/>
            <person name="Lapidus A."/>
            <person name="Barry K."/>
            <person name="Detter J.C."/>
            <person name="Glavina del Rio T."/>
            <person name="Hammon N."/>
            <person name="Israni S."/>
            <person name="Dalin E."/>
            <person name="Tice H."/>
            <person name="Pitluck S."/>
            <person name="Chertkov O."/>
            <person name="Brettin T."/>
            <person name="Bruce D."/>
            <person name="Han C."/>
            <person name="Tapia R."/>
            <person name="Gilna P."/>
            <person name="Schmutz J."/>
            <person name="Larimer F."/>
            <person name="Land M."/>
            <person name="Hauser L."/>
            <person name="Kyrpides N."/>
            <person name="Mikhailova N."/>
            <person name="Wu J.H.D."/>
            <person name="Newcomb M."/>
            <person name="Richardson P."/>
        </authorList>
    </citation>
    <scope>NUCLEOTIDE SEQUENCE [LARGE SCALE GENOMIC DNA]</scope>
    <source>
        <strain>ATCC 27405 / DSM 1237 / JCM 9322 / NBRC 103400 / NCIMB 10682 / NRRL B-4536 / VPI 7372</strain>
    </source>
</reference>
<keyword id="KW-0131">Cell cycle</keyword>
<keyword id="KW-0132">Cell division</keyword>
<keyword id="KW-1185">Reference proteome</keyword>
<protein>
    <recommendedName>
        <fullName evidence="1">Cell division topological specificity factor</fullName>
    </recommendedName>
</protein>
<comment type="function">
    <text evidence="1">Prevents the cell division inhibition by proteins MinC and MinD at internal division sites while permitting inhibition at polar sites. This ensures cell division at the proper site by restricting the formation of a division septum at the midpoint of the long axis of the cell.</text>
</comment>
<comment type="similarity">
    <text evidence="1">Belongs to the MinE family.</text>
</comment>